<sequence length="236" mass="24882">MPTIVLSLGGSILLPDIDRPNIKPYISVLTRISAKNRLFVVVGGGGTARQYISLARSFEADEAFSDELGIMVTRLNATLLVGALGQAAYPCVVTSHTEALCAAETGKIVVMGGITPGQTTDAVAAVLAERTGADIFINLTAVDGIYSADPRKDPAAKRFETMNPAELLDVVIGQQAVAGVNTVMDIVAVKMVERCGIPLLVMDGRDPALLESTLETGRFVGTLVTRNGKNPFPLKK</sequence>
<evidence type="ECO:0000255" key="1">
    <source>
        <dbReference type="HAMAP-Rule" id="MF_01220"/>
    </source>
</evidence>
<proteinExistence type="inferred from homology"/>
<dbReference type="EC" id="2.7.4.22" evidence="1"/>
<dbReference type="EMBL" id="CP000254">
    <property type="protein sequence ID" value="ABD40801.1"/>
    <property type="molecule type" value="Genomic_DNA"/>
</dbReference>
<dbReference type="RefSeq" id="WP_011448080.1">
    <property type="nucleotide sequence ID" value="NC_007796.1"/>
</dbReference>
<dbReference type="SMR" id="Q2FR36"/>
<dbReference type="FunCoup" id="Q2FR36">
    <property type="interactions" value="147"/>
</dbReference>
<dbReference type="STRING" id="323259.Mhun_1051"/>
<dbReference type="EnsemblBacteria" id="ABD40801">
    <property type="protein sequence ID" value="ABD40801"/>
    <property type="gene ID" value="Mhun_1051"/>
</dbReference>
<dbReference type="GeneID" id="3924727"/>
<dbReference type="KEGG" id="mhu:Mhun_1051"/>
<dbReference type="eggNOG" id="arCOG00858">
    <property type="taxonomic scope" value="Archaea"/>
</dbReference>
<dbReference type="HOGENOM" id="CLU_079546_0_0_2"/>
<dbReference type="InParanoid" id="Q2FR36"/>
<dbReference type="OrthoDB" id="372251at2157"/>
<dbReference type="UniPathway" id="UPA00159">
    <property type="reaction ID" value="UER00275"/>
</dbReference>
<dbReference type="Proteomes" id="UP000001941">
    <property type="component" value="Chromosome"/>
</dbReference>
<dbReference type="GO" id="GO:0005737">
    <property type="term" value="C:cytoplasm"/>
    <property type="evidence" value="ECO:0007669"/>
    <property type="project" value="UniProtKB-SubCell"/>
</dbReference>
<dbReference type="GO" id="GO:0005524">
    <property type="term" value="F:ATP binding"/>
    <property type="evidence" value="ECO:0007669"/>
    <property type="project" value="UniProtKB-KW"/>
</dbReference>
<dbReference type="GO" id="GO:0033862">
    <property type="term" value="F:UMP kinase activity"/>
    <property type="evidence" value="ECO:0007669"/>
    <property type="project" value="UniProtKB-EC"/>
</dbReference>
<dbReference type="GO" id="GO:0044210">
    <property type="term" value="P:'de novo' CTP biosynthetic process"/>
    <property type="evidence" value="ECO:0007669"/>
    <property type="project" value="UniProtKB-UniRule"/>
</dbReference>
<dbReference type="GO" id="GO:0006225">
    <property type="term" value="P:UDP biosynthetic process"/>
    <property type="evidence" value="ECO:0007669"/>
    <property type="project" value="TreeGrafter"/>
</dbReference>
<dbReference type="CDD" id="cd04253">
    <property type="entry name" value="AAK_UMPK-PyrH-Pf"/>
    <property type="match status" value="1"/>
</dbReference>
<dbReference type="Gene3D" id="3.40.1160.10">
    <property type="entry name" value="Acetylglutamate kinase-like"/>
    <property type="match status" value="1"/>
</dbReference>
<dbReference type="HAMAP" id="MF_01220_A">
    <property type="entry name" value="PyrH_A"/>
    <property type="match status" value="1"/>
</dbReference>
<dbReference type="InterPro" id="IPR036393">
    <property type="entry name" value="AceGlu_kinase-like_sf"/>
</dbReference>
<dbReference type="InterPro" id="IPR001048">
    <property type="entry name" value="Asp/Glu/Uridylate_kinase"/>
</dbReference>
<dbReference type="InterPro" id="IPR011817">
    <property type="entry name" value="Uridylate_kinase"/>
</dbReference>
<dbReference type="InterPro" id="IPR011818">
    <property type="entry name" value="Uridylate_kinase_arch/spir"/>
</dbReference>
<dbReference type="NCBIfam" id="TIGR02076">
    <property type="entry name" value="pyrH_arch"/>
    <property type="match status" value="1"/>
</dbReference>
<dbReference type="PANTHER" id="PTHR42833">
    <property type="entry name" value="URIDYLATE KINASE"/>
    <property type="match status" value="1"/>
</dbReference>
<dbReference type="PANTHER" id="PTHR42833:SF4">
    <property type="entry name" value="URIDYLATE KINASE PUMPKIN, CHLOROPLASTIC"/>
    <property type="match status" value="1"/>
</dbReference>
<dbReference type="Pfam" id="PF00696">
    <property type="entry name" value="AA_kinase"/>
    <property type="match status" value="1"/>
</dbReference>
<dbReference type="PIRSF" id="PIRSF005650">
    <property type="entry name" value="Uridylate_kin"/>
    <property type="match status" value="1"/>
</dbReference>
<dbReference type="SUPFAM" id="SSF53633">
    <property type="entry name" value="Carbamate kinase-like"/>
    <property type="match status" value="1"/>
</dbReference>
<organism>
    <name type="scientific">Methanospirillum hungatei JF-1 (strain ATCC 27890 / DSM 864 / NBRC 100397 / JF-1)</name>
    <dbReference type="NCBI Taxonomy" id="323259"/>
    <lineage>
        <taxon>Archaea</taxon>
        <taxon>Methanobacteriati</taxon>
        <taxon>Methanobacteriota</taxon>
        <taxon>Stenosarchaea group</taxon>
        <taxon>Methanomicrobia</taxon>
        <taxon>Methanomicrobiales</taxon>
        <taxon>Methanospirillaceae</taxon>
        <taxon>Methanospirillum</taxon>
    </lineage>
</organism>
<feature type="chain" id="PRO_0000323993" description="Uridylate kinase">
    <location>
        <begin position="1"/>
        <end position="236"/>
    </location>
</feature>
<feature type="binding site" evidence="1">
    <location>
        <begin position="10"/>
        <end position="11"/>
    </location>
    <ligand>
        <name>ATP</name>
        <dbReference type="ChEBI" id="CHEBI:30616"/>
    </ligand>
</feature>
<feature type="binding site" evidence="1">
    <location>
        <position position="44"/>
    </location>
    <ligand>
        <name>UMP</name>
        <dbReference type="ChEBI" id="CHEBI:57865"/>
    </ligand>
</feature>
<feature type="binding site" evidence="1">
    <location>
        <position position="45"/>
    </location>
    <ligand>
        <name>ATP</name>
        <dbReference type="ChEBI" id="CHEBI:30616"/>
    </ligand>
</feature>
<feature type="binding site" evidence="1">
    <location>
        <position position="49"/>
    </location>
    <ligand>
        <name>ATP</name>
        <dbReference type="ChEBI" id="CHEBI:30616"/>
    </ligand>
</feature>
<feature type="binding site" evidence="1">
    <location>
        <position position="66"/>
    </location>
    <ligand>
        <name>UMP</name>
        <dbReference type="ChEBI" id="CHEBI:57865"/>
    </ligand>
</feature>
<feature type="binding site" evidence="1">
    <location>
        <begin position="114"/>
        <end position="120"/>
    </location>
    <ligand>
        <name>UMP</name>
        <dbReference type="ChEBI" id="CHEBI:57865"/>
    </ligand>
</feature>
<feature type="binding site" evidence="1">
    <location>
        <position position="140"/>
    </location>
    <ligand>
        <name>ATP</name>
        <dbReference type="ChEBI" id="CHEBI:30616"/>
    </ligand>
</feature>
<feature type="binding site" evidence="1">
    <location>
        <position position="146"/>
    </location>
    <ligand>
        <name>ATP</name>
        <dbReference type="ChEBI" id="CHEBI:30616"/>
    </ligand>
</feature>
<feature type="binding site" evidence="1">
    <location>
        <position position="149"/>
    </location>
    <ligand>
        <name>ATP</name>
        <dbReference type="ChEBI" id="CHEBI:30616"/>
    </ligand>
</feature>
<gene>
    <name evidence="1" type="primary">pyrH</name>
    <name type="ordered locus">Mhun_1051</name>
</gene>
<protein>
    <recommendedName>
        <fullName evidence="1">Uridylate kinase</fullName>
        <shortName evidence="1">UK</shortName>
        <ecNumber evidence="1">2.7.4.22</ecNumber>
    </recommendedName>
    <alternativeName>
        <fullName evidence="1">Uridine monophosphate kinase</fullName>
        <shortName evidence="1">UMP kinase</shortName>
        <shortName evidence="1">UMPK</shortName>
    </alternativeName>
</protein>
<keyword id="KW-0067">ATP-binding</keyword>
<keyword id="KW-0963">Cytoplasm</keyword>
<keyword id="KW-0418">Kinase</keyword>
<keyword id="KW-0547">Nucleotide-binding</keyword>
<keyword id="KW-0665">Pyrimidine biosynthesis</keyword>
<keyword id="KW-1185">Reference proteome</keyword>
<keyword id="KW-0808">Transferase</keyword>
<name>PYRH_METHJ</name>
<accession>Q2FR36</accession>
<reference key="1">
    <citation type="journal article" date="2016" name="Stand. Genomic Sci.">
        <title>Complete genome sequence of Methanospirillum hungatei type strain JF1.</title>
        <authorList>
            <person name="Gunsalus R.P."/>
            <person name="Cook L.E."/>
            <person name="Crable B."/>
            <person name="Rohlin L."/>
            <person name="McDonald E."/>
            <person name="Mouttaki H."/>
            <person name="Sieber J.R."/>
            <person name="Poweleit N."/>
            <person name="Zhou H."/>
            <person name="Lapidus A.L."/>
            <person name="Daligault H.E."/>
            <person name="Land M."/>
            <person name="Gilna P."/>
            <person name="Ivanova N."/>
            <person name="Kyrpides N."/>
            <person name="Culley D.E."/>
            <person name="McInerney M.J."/>
        </authorList>
    </citation>
    <scope>NUCLEOTIDE SEQUENCE [LARGE SCALE GENOMIC DNA]</scope>
    <source>
        <strain>ATCC 27890 / DSM 864 / NBRC 100397 / JF-1</strain>
    </source>
</reference>
<comment type="function">
    <text evidence="1">Catalyzes the reversible phosphorylation of UMP to UDP.</text>
</comment>
<comment type="catalytic activity">
    <reaction evidence="1">
        <text>UMP + ATP = UDP + ADP</text>
        <dbReference type="Rhea" id="RHEA:24400"/>
        <dbReference type="ChEBI" id="CHEBI:30616"/>
        <dbReference type="ChEBI" id="CHEBI:57865"/>
        <dbReference type="ChEBI" id="CHEBI:58223"/>
        <dbReference type="ChEBI" id="CHEBI:456216"/>
        <dbReference type="EC" id="2.7.4.22"/>
    </reaction>
</comment>
<comment type="activity regulation">
    <text evidence="1">Inhibited by UTP.</text>
</comment>
<comment type="pathway">
    <text evidence="1">Pyrimidine metabolism; CTP biosynthesis via de novo pathway; UDP from UMP (UMPK route): step 1/1.</text>
</comment>
<comment type="subunit">
    <text evidence="1">Homohexamer.</text>
</comment>
<comment type="subcellular location">
    <subcellularLocation>
        <location evidence="1">Cytoplasm</location>
    </subcellularLocation>
</comment>
<comment type="similarity">
    <text evidence="1">Belongs to the UMP kinase family.</text>
</comment>